<keyword id="KW-0963">Cytoplasm</keyword>
<keyword id="KW-0378">Hydrolase</keyword>
<keyword id="KW-1185">Reference proteome</keyword>
<keyword id="KW-0694">RNA-binding</keyword>
<keyword id="KW-0820">tRNA-binding</keyword>
<proteinExistence type="inferred from homology"/>
<name>PTH_GLUOX</name>
<organism>
    <name type="scientific">Gluconobacter oxydans (strain 621H)</name>
    <name type="common">Gluconobacter suboxydans</name>
    <dbReference type="NCBI Taxonomy" id="290633"/>
    <lineage>
        <taxon>Bacteria</taxon>
        <taxon>Pseudomonadati</taxon>
        <taxon>Pseudomonadota</taxon>
        <taxon>Alphaproteobacteria</taxon>
        <taxon>Acetobacterales</taxon>
        <taxon>Acetobacteraceae</taxon>
        <taxon>Gluconobacter</taxon>
    </lineage>
</organism>
<accession>Q5FRT7</accession>
<sequence>MRLWTGLGNPEPGMSRHRHNIGFMAVDEIARRHGFSPWRKRFRGETSEGVIGGQKILLLKPMTYMNRSGDSVQQAAQFFKIAQDDITVFHDELDLAFGKLRIKRGGGAAGHNGLRSMDKCLPGPDYWRVRMGIGHPGHKDRVTGHVLGNFAKAEEPELERWLEAIADAAPLLAKKEHEAFMTKVALLAA</sequence>
<reference key="1">
    <citation type="journal article" date="2005" name="Nat. Biotechnol.">
        <title>Complete genome sequence of the acetic acid bacterium Gluconobacter oxydans.</title>
        <authorList>
            <person name="Prust C."/>
            <person name="Hoffmeister M."/>
            <person name="Liesegang H."/>
            <person name="Wiezer A."/>
            <person name="Fricke W.F."/>
            <person name="Ehrenreich A."/>
            <person name="Gottschalk G."/>
            <person name="Deppenmeier U."/>
        </authorList>
    </citation>
    <scope>NUCLEOTIDE SEQUENCE [LARGE SCALE GENOMIC DNA]</scope>
    <source>
        <strain>621H</strain>
    </source>
</reference>
<evidence type="ECO:0000255" key="1">
    <source>
        <dbReference type="HAMAP-Rule" id="MF_00083"/>
    </source>
</evidence>
<dbReference type="EC" id="3.1.1.29" evidence="1"/>
<dbReference type="EMBL" id="CP000009">
    <property type="protein sequence ID" value="AAW60909.1"/>
    <property type="molecule type" value="Genomic_DNA"/>
</dbReference>
<dbReference type="RefSeq" id="WP_011252701.1">
    <property type="nucleotide sequence ID" value="NZ_LT900338.1"/>
</dbReference>
<dbReference type="SMR" id="Q5FRT7"/>
<dbReference type="STRING" id="290633.GOX1142"/>
<dbReference type="GeneID" id="56905446"/>
<dbReference type="KEGG" id="gox:GOX1142"/>
<dbReference type="eggNOG" id="COG0193">
    <property type="taxonomic scope" value="Bacteria"/>
</dbReference>
<dbReference type="HOGENOM" id="CLU_062456_1_0_5"/>
<dbReference type="Proteomes" id="UP000006375">
    <property type="component" value="Chromosome"/>
</dbReference>
<dbReference type="GO" id="GO:0005737">
    <property type="term" value="C:cytoplasm"/>
    <property type="evidence" value="ECO:0007669"/>
    <property type="project" value="UniProtKB-SubCell"/>
</dbReference>
<dbReference type="GO" id="GO:0004045">
    <property type="term" value="F:peptidyl-tRNA hydrolase activity"/>
    <property type="evidence" value="ECO:0007669"/>
    <property type="project" value="UniProtKB-UniRule"/>
</dbReference>
<dbReference type="GO" id="GO:0000049">
    <property type="term" value="F:tRNA binding"/>
    <property type="evidence" value="ECO:0007669"/>
    <property type="project" value="UniProtKB-UniRule"/>
</dbReference>
<dbReference type="GO" id="GO:0006515">
    <property type="term" value="P:protein quality control for misfolded or incompletely synthesized proteins"/>
    <property type="evidence" value="ECO:0007669"/>
    <property type="project" value="UniProtKB-UniRule"/>
</dbReference>
<dbReference type="GO" id="GO:0072344">
    <property type="term" value="P:rescue of stalled ribosome"/>
    <property type="evidence" value="ECO:0007669"/>
    <property type="project" value="UniProtKB-UniRule"/>
</dbReference>
<dbReference type="CDD" id="cd00462">
    <property type="entry name" value="PTH"/>
    <property type="match status" value="1"/>
</dbReference>
<dbReference type="FunFam" id="3.40.50.1470:FF:000001">
    <property type="entry name" value="Peptidyl-tRNA hydrolase"/>
    <property type="match status" value="1"/>
</dbReference>
<dbReference type="Gene3D" id="3.40.50.1470">
    <property type="entry name" value="Peptidyl-tRNA hydrolase"/>
    <property type="match status" value="1"/>
</dbReference>
<dbReference type="HAMAP" id="MF_00083">
    <property type="entry name" value="Pept_tRNA_hydro_bact"/>
    <property type="match status" value="1"/>
</dbReference>
<dbReference type="InterPro" id="IPR001328">
    <property type="entry name" value="Pept_tRNA_hydro"/>
</dbReference>
<dbReference type="InterPro" id="IPR018171">
    <property type="entry name" value="Pept_tRNA_hydro_CS"/>
</dbReference>
<dbReference type="InterPro" id="IPR036416">
    <property type="entry name" value="Pept_tRNA_hydro_sf"/>
</dbReference>
<dbReference type="NCBIfam" id="TIGR00447">
    <property type="entry name" value="pth"/>
    <property type="match status" value="1"/>
</dbReference>
<dbReference type="PANTHER" id="PTHR17224">
    <property type="entry name" value="PEPTIDYL-TRNA HYDROLASE"/>
    <property type="match status" value="1"/>
</dbReference>
<dbReference type="PANTHER" id="PTHR17224:SF1">
    <property type="entry name" value="PEPTIDYL-TRNA HYDROLASE"/>
    <property type="match status" value="1"/>
</dbReference>
<dbReference type="Pfam" id="PF01195">
    <property type="entry name" value="Pept_tRNA_hydro"/>
    <property type="match status" value="1"/>
</dbReference>
<dbReference type="SUPFAM" id="SSF53178">
    <property type="entry name" value="Peptidyl-tRNA hydrolase-like"/>
    <property type="match status" value="1"/>
</dbReference>
<dbReference type="PROSITE" id="PS01196">
    <property type="entry name" value="PEPT_TRNA_HYDROL_2"/>
    <property type="match status" value="1"/>
</dbReference>
<protein>
    <recommendedName>
        <fullName evidence="1">Peptidyl-tRNA hydrolase</fullName>
        <shortName evidence="1">Pth</shortName>
        <ecNumber evidence="1">3.1.1.29</ecNumber>
    </recommendedName>
</protein>
<feature type="chain" id="PRO_0000187745" description="Peptidyl-tRNA hydrolase">
    <location>
        <begin position="1"/>
        <end position="189"/>
    </location>
</feature>
<feature type="active site" description="Proton acceptor" evidence="1">
    <location>
        <position position="19"/>
    </location>
</feature>
<feature type="binding site" evidence="1">
    <location>
        <position position="64"/>
    </location>
    <ligand>
        <name>tRNA</name>
        <dbReference type="ChEBI" id="CHEBI:17843"/>
    </ligand>
</feature>
<feature type="binding site" evidence="1">
    <location>
        <position position="66"/>
    </location>
    <ligand>
        <name>tRNA</name>
        <dbReference type="ChEBI" id="CHEBI:17843"/>
    </ligand>
</feature>
<feature type="binding site" evidence="1">
    <location>
        <position position="112"/>
    </location>
    <ligand>
        <name>tRNA</name>
        <dbReference type="ChEBI" id="CHEBI:17843"/>
    </ligand>
</feature>
<feature type="site" description="Discriminates between blocked and unblocked aminoacyl-tRNA" evidence="1">
    <location>
        <position position="9"/>
    </location>
</feature>
<feature type="site" description="Stabilizes the basic form of H active site to accept a proton" evidence="1">
    <location>
        <position position="91"/>
    </location>
</feature>
<comment type="function">
    <text evidence="1">Hydrolyzes ribosome-free peptidyl-tRNAs (with 1 or more amino acids incorporated), which drop off the ribosome during protein synthesis, or as a result of ribosome stalling.</text>
</comment>
<comment type="function">
    <text evidence="1">Catalyzes the release of premature peptidyl moieties from peptidyl-tRNA molecules trapped in stalled 50S ribosomal subunits, and thus maintains levels of free tRNAs and 50S ribosomes.</text>
</comment>
<comment type="catalytic activity">
    <reaction evidence="1">
        <text>an N-acyl-L-alpha-aminoacyl-tRNA + H2O = an N-acyl-L-amino acid + a tRNA + H(+)</text>
        <dbReference type="Rhea" id="RHEA:54448"/>
        <dbReference type="Rhea" id="RHEA-COMP:10123"/>
        <dbReference type="Rhea" id="RHEA-COMP:13883"/>
        <dbReference type="ChEBI" id="CHEBI:15377"/>
        <dbReference type="ChEBI" id="CHEBI:15378"/>
        <dbReference type="ChEBI" id="CHEBI:59874"/>
        <dbReference type="ChEBI" id="CHEBI:78442"/>
        <dbReference type="ChEBI" id="CHEBI:138191"/>
        <dbReference type="EC" id="3.1.1.29"/>
    </reaction>
</comment>
<comment type="subunit">
    <text evidence="1">Monomer.</text>
</comment>
<comment type="subcellular location">
    <subcellularLocation>
        <location evidence="1">Cytoplasm</location>
    </subcellularLocation>
</comment>
<comment type="similarity">
    <text evidence="1">Belongs to the PTH family.</text>
</comment>
<gene>
    <name evidence="1" type="primary">pth</name>
    <name type="ordered locus">GOX1142</name>
</gene>